<comment type="function">
    <text evidence="2 3 5 8">Phytoglobin that reduces nitrite to nitric oxide (NO) under anoxic conditions (e.g. during flooding or in waterlogged soil) and upon root nodulation (By similarity). Required for general plant development and during nodulation, especially for the onset of symbiosis (By similarity). Monitors nitric oxide (NO) levels during early phase of the nitrogen-fixing symbiosis and buffers oxygen in functioning nodules (By similarity). May not function as an oxygen storage or transport protein (By similarity). Has an unusually high affinity for O(2) through a hexacoordinate heme iron because of a very low dissociation constant (By similarity). Involved in water stress tolerance (PubMed:34737003).</text>
</comment>
<comment type="catalytic activity">
    <reaction evidence="3">
        <text>Fe(III)-heme b-[protein] + nitric oxide + H2O = Fe(II)-heme b-[protein] + nitrite + 2 H(+)</text>
        <dbReference type="Rhea" id="RHEA:77711"/>
        <dbReference type="Rhea" id="RHEA-COMP:18975"/>
        <dbReference type="Rhea" id="RHEA-COMP:18976"/>
        <dbReference type="ChEBI" id="CHEBI:15377"/>
        <dbReference type="ChEBI" id="CHEBI:15378"/>
        <dbReference type="ChEBI" id="CHEBI:16301"/>
        <dbReference type="ChEBI" id="CHEBI:16480"/>
        <dbReference type="ChEBI" id="CHEBI:55376"/>
        <dbReference type="ChEBI" id="CHEBI:60344"/>
    </reaction>
    <physiologicalReaction direction="right-to-left" evidence="3">
        <dbReference type="Rhea" id="RHEA:77713"/>
    </physiologicalReaction>
</comment>
<comment type="cofactor">
    <cofactor evidence="4">
        <name>heme b</name>
        <dbReference type="ChEBI" id="CHEBI:60344"/>
    </cofactor>
    <text evidence="4">Binds 1 heme group per subunit.</text>
</comment>
<comment type="subunit">
    <text evidence="3">Homodimer.</text>
</comment>
<comment type="subcellular location">
    <subcellularLocation>
        <location evidence="1">Cytoplasm</location>
    </subcellularLocation>
    <subcellularLocation>
        <location evidence="1">Nucleus</location>
    </subcellularLocation>
</comment>
<comment type="alternative products">
    <event type="alternative splicing"/>
    <isoform>
        <id>I1LJI1-1</id>
        <name>1</name>
        <sequence type="displayed"/>
    </isoform>
    <isoform>
        <id>I1LJI1-2</id>
        <name>2</name>
        <sequence type="described" ref="VSP_062300"/>
    </isoform>
</comment>
<comment type="tissue specificity">
    <text evidence="7">Predominantly expressed in leaves, to a lower extent in roots, and barely in stems, flowers and seeds.</text>
</comment>
<comment type="induction">
    <text evidence="8">Moderately induced by waterlogging in roots, but down-regulated in leaves.</text>
</comment>
<comment type="similarity">
    <text evidence="11">Belongs to the plant globin family.</text>
</comment>
<keyword id="KW-0025">Alternative splicing</keyword>
<keyword id="KW-0963">Cytoplasm</keyword>
<keyword id="KW-0349">Heme</keyword>
<keyword id="KW-0408">Iron</keyword>
<keyword id="KW-0479">Metal-binding</keyword>
<keyword id="KW-0539">Nucleus</keyword>
<keyword id="KW-0560">Oxidoreductase</keyword>
<keyword id="KW-0561">Oxygen transport</keyword>
<keyword id="KW-1185">Reference proteome</keyword>
<keyword id="KW-0813">Transport</keyword>
<protein>
    <recommendedName>
        <fullName evidence="11">Anaerobic nitrite reductase Hb1</fullName>
        <ecNumber evidence="3">1.7.2.-</ecNumber>
    </recommendedName>
    <alternativeName>
        <fullName evidence="10">Hemoglobin 1-1</fullName>
        <shortName evidence="10">GmGLB1-1</shortName>
    </alternativeName>
    <alternativeName>
        <fullName evidence="9">Non-symbiotic hemoglobin 1</fullName>
        <shortName evidence="9">GmHb1</shortName>
    </alternativeName>
    <alternativeName>
        <fullName evidence="10">Non-symbiotic hemoglobin 1-like</fullName>
    </alternativeName>
</protein>
<name>NSHB1_SOYBN</name>
<reference key="1">
    <citation type="submission" date="2009-08" db="EMBL/GenBank/DDBJ databases">
        <authorList>
            <person name="Cheung F."/>
            <person name="Xiao Y."/>
            <person name="Chan A."/>
            <person name="Moskal W."/>
            <person name="Town C.D."/>
        </authorList>
    </citation>
    <scope>NUCLEOTIDE SEQUENCE [MRNA] (ISOFORM 2)</scope>
</reference>
<reference key="2">
    <citation type="journal article" date="2010" name="Nature">
        <title>Genome sequence of the palaeopolyploid soybean.</title>
        <authorList>
            <person name="Schmutz J."/>
            <person name="Cannon S.B."/>
            <person name="Schlueter J."/>
            <person name="Ma J."/>
            <person name="Mitros T."/>
            <person name="Nelson W."/>
            <person name="Hyten D.L."/>
            <person name="Song Q."/>
            <person name="Thelen J.J."/>
            <person name="Cheng J."/>
            <person name="Xu D."/>
            <person name="Hellsten U."/>
            <person name="May G.D."/>
            <person name="Yu Y."/>
            <person name="Sakurai T."/>
            <person name="Umezawa T."/>
            <person name="Bhattacharyya M.K."/>
            <person name="Sandhu D."/>
            <person name="Valliyodan B."/>
            <person name="Lindquist E."/>
            <person name="Peto M."/>
            <person name="Grant D."/>
            <person name="Shu S."/>
            <person name="Goodstein D."/>
            <person name="Barry K."/>
            <person name="Futrell-Griggs M."/>
            <person name="Abernathy B."/>
            <person name="Du J."/>
            <person name="Tian Z."/>
            <person name="Zhu L."/>
            <person name="Gill N."/>
            <person name="Joshi T."/>
            <person name="Libault M."/>
            <person name="Sethuraman A."/>
            <person name="Zhang X.-C."/>
            <person name="Shinozaki K."/>
            <person name="Nguyen H.T."/>
            <person name="Wing R.A."/>
            <person name="Cregan P."/>
            <person name="Specht J."/>
            <person name="Grimwood J."/>
            <person name="Rokhsar D."/>
            <person name="Stacey G."/>
            <person name="Shoemaker R.C."/>
            <person name="Jackson S.A."/>
        </authorList>
    </citation>
    <scope>NUCLEOTIDE SEQUENCE [LARGE SCALE GENOMIC DNA]</scope>
    <source>
        <strain>cv. Williams 82</strain>
        <tissue>Callus</tissue>
    </source>
</reference>
<reference key="3">
    <citation type="journal article" date="2020" name="Ann. Bot.">
        <title>Excess nitrate induces nodule greening and reduces transcript and protein expression levels of soybean leghaemoglobins.</title>
        <authorList>
            <person name="Du M."/>
            <person name="Gao Z."/>
            <person name="Li X."/>
            <person name="Liao H."/>
        </authorList>
    </citation>
    <scope>FUNCTION</scope>
    <scope>TISSUE SPECIFICITY</scope>
    <scope>GENE FAMILY</scope>
    <scope>NOMENCLATURE</scope>
    <source>
        <strain>cv. HN66</strain>
    </source>
</reference>
<reference key="4">
    <citation type="journal article" date="2022" name="Gene">
        <title>Uncovering the roles of hemoglobins in soybean facing water stress.</title>
        <authorList>
            <person name="Koltun A."/>
            <person name="Fuhrmann-Aoyagi M.B."/>
            <person name="Cardoso Moraes L.A."/>
            <person name="Lima Nepomuceno A."/>
            <person name="Simoes Azeredo Goncalves L."/>
            <person name="Mertz-Henning L.M."/>
        </authorList>
    </citation>
    <scope>FUNCTION</scope>
    <scope>INDUCTION BY WATERLOGGING</scope>
    <scope>GENE FAMILY</scope>
    <scope>NOMENCLATURE</scope>
    <source>
        <strain>cv. BR-4</strain>
        <strain>cv. Embrapa 45</strain>
    </source>
</reference>
<dbReference type="EC" id="1.7.2.-" evidence="3"/>
<dbReference type="EMBL" id="BT091794">
    <property type="protein sequence ID" value="ACU16023.1"/>
    <property type="molecule type" value="mRNA"/>
</dbReference>
<dbReference type="EMBL" id="CM000844">
    <property type="protein sequence ID" value="KRH29528.1"/>
    <property type="molecule type" value="Genomic_DNA"/>
</dbReference>
<dbReference type="EMBL" id="CM000844">
    <property type="protein sequence ID" value="KRH29529.1"/>
    <property type="molecule type" value="Genomic_DNA"/>
</dbReference>
<dbReference type="SMR" id="I1LJI1"/>
<dbReference type="FunCoup" id="I1LJI1">
    <property type="interactions" value="43"/>
</dbReference>
<dbReference type="STRING" id="3847.I1LJI1"/>
<dbReference type="PaxDb" id="3847-GLYMA11G12960.1"/>
<dbReference type="EnsemblPlants" id="KRH29528">
    <molecule id="I1LJI1-1"/>
    <property type="protein sequence ID" value="KRH29528"/>
    <property type="gene ID" value="GLYMA_11G121700"/>
</dbReference>
<dbReference type="EnsemblPlants" id="KRH29529">
    <molecule id="I1LJI1-2"/>
    <property type="protein sequence ID" value="KRH29529"/>
    <property type="gene ID" value="GLYMA_11G121700"/>
</dbReference>
<dbReference type="Gramene" id="KRH29528">
    <molecule id="I1LJI1-1"/>
    <property type="protein sequence ID" value="KRH29528"/>
    <property type="gene ID" value="GLYMA_11G121700"/>
</dbReference>
<dbReference type="Gramene" id="KRH29529">
    <molecule id="I1LJI1-2"/>
    <property type="protein sequence ID" value="KRH29529"/>
    <property type="gene ID" value="GLYMA_11G121700"/>
</dbReference>
<dbReference type="eggNOG" id="KOG3378">
    <property type="taxonomic scope" value="Eukaryota"/>
</dbReference>
<dbReference type="HOGENOM" id="CLU_003827_11_2_1"/>
<dbReference type="InParanoid" id="I1LJI1"/>
<dbReference type="OMA" id="VARHMDF"/>
<dbReference type="OrthoDB" id="436496at2759"/>
<dbReference type="Proteomes" id="UP000008827">
    <property type="component" value="Chromosome 11"/>
</dbReference>
<dbReference type="ExpressionAtlas" id="I1LJI1">
    <property type="expression patterns" value="baseline"/>
</dbReference>
<dbReference type="GO" id="GO:0005737">
    <property type="term" value="C:cytoplasm"/>
    <property type="evidence" value="ECO:0007669"/>
    <property type="project" value="UniProtKB-SubCell"/>
</dbReference>
<dbReference type="GO" id="GO:0005634">
    <property type="term" value="C:nucleus"/>
    <property type="evidence" value="ECO:0007669"/>
    <property type="project" value="UniProtKB-SubCell"/>
</dbReference>
<dbReference type="GO" id="GO:0020037">
    <property type="term" value="F:heme binding"/>
    <property type="evidence" value="ECO:0007669"/>
    <property type="project" value="InterPro"/>
</dbReference>
<dbReference type="GO" id="GO:0046872">
    <property type="term" value="F:metal ion binding"/>
    <property type="evidence" value="ECO:0007669"/>
    <property type="project" value="UniProtKB-KW"/>
</dbReference>
<dbReference type="GO" id="GO:0016491">
    <property type="term" value="F:oxidoreductase activity"/>
    <property type="evidence" value="ECO:0007669"/>
    <property type="project" value="UniProtKB-KW"/>
</dbReference>
<dbReference type="GO" id="GO:0019825">
    <property type="term" value="F:oxygen binding"/>
    <property type="evidence" value="ECO:0007669"/>
    <property type="project" value="InterPro"/>
</dbReference>
<dbReference type="GO" id="GO:0005344">
    <property type="term" value="F:oxygen carrier activity"/>
    <property type="evidence" value="ECO:0007669"/>
    <property type="project" value="UniProtKB-KW"/>
</dbReference>
<dbReference type="GO" id="GO:0009413">
    <property type="term" value="P:response to flooding"/>
    <property type="evidence" value="ECO:0000314"/>
    <property type="project" value="UniProtKB"/>
</dbReference>
<dbReference type="CDD" id="cd14784">
    <property type="entry name" value="class1_nsHb-like"/>
    <property type="match status" value="1"/>
</dbReference>
<dbReference type="Gene3D" id="1.10.490.10">
    <property type="entry name" value="Globins"/>
    <property type="match status" value="1"/>
</dbReference>
<dbReference type="InterPro" id="IPR000971">
    <property type="entry name" value="Globin"/>
</dbReference>
<dbReference type="InterPro" id="IPR009050">
    <property type="entry name" value="Globin-like_sf"/>
</dbReference>
<dbReference type="InterPro" id="IPR012292">
    <property type="entry name" value="Globin/Proto"/>
</dbReference>
<dbReference type="InterPro" id="IPR001032">
    <property type="entry name" value="Leghaemoglobin-like"/>
</dbReference>
<dbReference type="InterPro" id="IPR019824">
    <property type="entry name" value="Leghaemoglobin_Fe_BS"/>
</dbReference>
<dbReference type="PANTHER" id="PTHR22924">
    <property type="entry name" value="LEGHEMOGLOBIN-RELATED"/>
    <property type="match status" value="1"/>
</dbReference>
<dbReference type="PANTHER" id="PTHR22924:SF89">
    <property type="entry name" value="NON-SYMBIOTIC HEMOGLOBIN"/>
    <property type="match status" value="1"/>
</dbReference>
<dbReference type="Pfam" id="PF00042">
    <property type="entry name" value="Globin"/>
    <property type="match status" value="1"/>
</dbReference>
<dbReference type="PRINTS" id="PR00188">
    <property type="entry name" value="PLANTGLOBIN"/>
</dbReference>
<dbReference type="SUPFAM" id="SSF46458">
    <property type="entry name" value="Globin-like"/>
    <property type="match status" value="1"/>
</dbReference>
<dbReference type="PROSITE" id="PS01033">
    <property type="entry name" value="GLOBIN"/>
    <property type="match status" value="1"/>
</dbReference>
<dbReference type="PROSITE" id="PS00208">
    <property type="entry name" value="PLANT_GLOBIN"/>
    <property type="match status" value="1"/>
</dbReference>
<proteinExistence type="evidence at transcript level"/>
<sequence length="157" mass="17599">MEGKGFTEEQEALVVKSWNEMKKNSQELGLKFFKKILEIAPAAQQLFSFLKDSTVPLEENPKLKPHAMAVFVMTCESAVQLRKAGKVTVRESNLKRLGATHFKAGVAAEHFEVTKLALLETIKEAVPEMWSPAMKNAWEEAHDQLAEAIKSEMKPSD</sequence>
<gene>
    <name evidence="9" type="primary">HB1</name>
    <name evidence="10" type="synonym">GLB1-1</name>
    <name evidence="12" type="ordered locus">Glyma_11G121700</name>
</gene>
<feature type="chain" id="PRO_0000460311" description="Anaerobic nitrite reductase Hb1">
    <location>
        <begin position="1"/>
        <end position="157"/>
    </location>
</feature>
<feature type="domain" description="Globin" evidence="6">
    <location>
        <begin position="5"/>
        <end position="154"/>
    </location>
</feature>
<feature type="short sequence motif" description="Homodimerization" evidence="3">
    <location>
        <begin position="38"/>
        <end position="42"/>
    </location>
</feature>
<feature type="short sequence motif" description="Homodimerization" evidence="3">
    <location>
        <begin position="108"/>
        <end position="120"/>
    </location>
</feature>
<feature type="binding site" evidence="4">
    <location>
        <position position="48"/>
    </location>
    <ligand>
        <name>heme b</name>
        <dbReference type="ChEBI" id="CHEBI:60344"/>
    </ligand>
</feature>
<feature type="binding site" evidence="3">
    <location>
        <position position="62"/>
    </location>
    <ligand>
        <name>heme b</name>
        <dbReference type="ChEBI" id="CHEBI:60344"/>
    </ligand>
</feature>
<feature type="binding site" description="distal binding residue" evidence="6">
    <location>
        <position position="66"/>
    </location>
    <ligand>
        <name>heme b</name>
        <dbReference type="ChEBI" id="CHEBI:60344"/>
    </ligand>
    <ligandPart>
        <name>Fe</name>
        <dbReference type="ChEBI" id="CHEBI:18248"/>
    </ligandPart>
</feature>
<feature type="binding site" evidence="3">
    <location>
        <position position="96"/>
    </location>
    <ligand>
        <name>heme b</name>
        <dbReference type="ChEBI" id="CHEBI:60344"/>
    </ligand>
</feature>
<feature type="binding site" evidence="3">
    <location>
        <position position="100"/>
    </location>
    <ligand>
        <name>heme b</name>
        <dbReference type="ChEBI" id="CHEBI:60344"/>
    </ligand>
</feature>
<feature type="binding site" description="proximal binding residue" evidence="6">
    <location>
        <position position="101"/>
    </location>
    <ligand>
        <name>heme b</name>
        <dbReference type="ChEBI" id="CHEBI:60344"/>
    </ligand>
    <ligandPart>
        <name>Fe</name>
        <dbReference type="ChEBI" id="CHEBI:18248"/>
    </ligandPart>
</feature>
<feature type="site" description="Homodimerization" evidence="3">
    <location>
        <position position="135"/>
    </location>
</feature>
<feature type="splice variant" id="VSP_062300" description="In isoform 2.">
    <location>
        <begin position="74"/>
        <end position="112"/>
    </location>
</feature>
<organism>
    <name type="scientific">Glycine max</name>
    <name type="common">Soybean</name>
    <name type="synonym">Glycine hispida</name>
    <dbReference type="NCBI Taxonomy" id="3847"/>
    <lineage>
        <taxon>Eukaryota</taxon>
        <taxon>Viridiplantae</taxon>
        <taxon>Streptophyta</taxon>
        <taxon>Embryophyta</taxon>
        <taxon>Tracheophyta</taxon>
        <taxon>Spermatophyta</taxon>
        <taxon>Magnoliopsida</taxon>
        <taxon>eudicotyledons</taxon>
        <taxon>Gunneridae</taxon>
        <taxon>Pentapetalae</taxon>
        <taxon>rosids</taxon>
        <taxon>fabids</taxon>
        <taxon>Fabales</taxon>
        <taxon>Fabaceae</taxon>
        <taxon>Papilionoideae</taxon>
        <taxon>50 kb inversion clade</taxon>
        <taxon>NPAAA clade</taxon>
        <taxon>indigoferoid/millettioid clade</taxon>
        <taxon>Phaseoleae</taxon>
        <taxon>Glycine</taxon>
        <taxon>Glycine subgen. Soja</taxon>
    </lineage>
</organism>
<accession>I1LJI1</accession>
<accession>C6T2Y5</accession>
<evidence type="ECO:0000250" key="1">
    <source>
        <dbReference type="UniProtKB" id="A2XE98"/>
    </source>
</evidence>
<evidence type="ECO:0000250" key="2">
    <source>
        <dbReference type="UniProtKB" id="I3SPW2"/>
    </source>
</evidence>
<evidence type="ECO:0000250" key="3">
    <source>
        <dbReference type="UniProtKB" id="O04986"/>
    </source>
</evidence>
<evidence type="ECO:0000250" key="4">
    <source>
        <dbReference type="UniProtKB" id="P68168"/>
    </source>
</evidence>
<evidence type="ECO:0000250" key="5">
    <source>
        <dbReference type="UniProtKB" id="Q3C1F4"/>
    </source>
</evidence>
<evidence type="ECO:0000255" key="6">
    <source>
        <dbReference type="PROSITE-ProRule" id="PRU00238"/>
    </source>
</evidence>
<evidence type="ECO:0000269" key="7">
    <source>
    </source>
</evidence>
<evidence type="ECO:0000269" key="8">
    <source>
    </source>
</evidence>
<evidence type="ECO:0000303" key="9">
    <source>
    </source>
</evidence>
<evidence type="ECO:0000303" key="10">
    <source>
    </source>
</evidence>
<evidence type="ECO:0000305" key="11"/>
<evidence type="ECO:0000312" key="12">
    <source>
        <dbReference type="EMBL" id="KRH29528.1"/>
    </source>
</evidence>